<feature type="chain" id="PRO_0000416548" description="Nonribosomal peptide synthetase 7">
    <location>
        <begin position="1"/>
        <end position="2353"/>
    </location>
</feature>
<feature type="domain" description="Carrier 1" evidence="1">
    <location>
        <begin position="776"/>
        <end position="853"/>
    </location>
</feature>
<feature type="domain" description="Carrier 2" evidence="1">
    <location>
        <begin position="1826"/>
        <end position="1902"/>
    </location>
</feature>
<feature type="region of interest" description="Adenylation 1">
    <location>
        <begin position="305"/>
        <end position="684"/>
    </location>
</feature>
<feature type="region of interest" description="Condensation 1">
    <location>
        <begin position="885"/>
        <end position="1147"/>
    </location>
</feature>
<feature type="region of interest" description="Adenylation 2">
    <location>
        <begin position="1338"/>
        <end position="1725"/>
    </location>
</feature>
<feature type="region of interest" description="Condensation 2">
    <location>
        <begin position="1939"/>
        <end position="2214"/>
    </location>
</feature>
<feature type="modified residue" description="O-(pantetheine 4'-phosphoryl)serine" evidence="1">
    <location>
        <position position="813"/>
    </location>
</feature>
<feature type="modified residue" description="O-(pantetheine 4'-phosphoryl)serine" evidence="1">
    <location>
        <position position="1863"/>
    </location>
</feature>
<accession>Q4WZ44</accession>
<proteinExistence type="inferred from homology"/>
<sequence length="2353" mass="258475">MAPYIGTQEGSPSSLGTFSHVQLSKDTNVASQYWEELFHSVGSQPRLACVPLDHQWPRAETTVLASDGLLEAATTFSRTHNISLADLIYAVWAIVSARQTVSGQSTALFTVTGRSYPSAKQDTPENGRAEQDYPLLLSVPEDVDVLSWVRSVSTAAATASALSYIGYDRIMERTSGIRPQVKVSVTFEVDSHDTMAPDDDFPLVFNIIASARLQLSMRHNATVPRGDVRALLDRFAATLQRVTANHDAKVSSVDIMPPAERQLLLDYGKAPLKPKSGMAHSLIEEQAKARPDAAAVQYETEPPLTFSALNTRANQLARQIRPYGTKYIAVHLRMSTDFIVALLAILKSGAAYVILDPDAPAARKSFILDDLQPGLVLVDISTAGELANEVQLGSLLSQASSHDTGDLLHVQDPSSVAYVIYTSGSTGKPKPTLLEHQAVFNGLLAFPPIEGLRQLLFFNPAFSAAQRSIWATLAVGGCLCLASKENLTVHTAKMINTMDINSVDMTSSAAALISPDDVPSLRRMVLGGEMVNPAVIQRWEHRVELLSSYGLSECTQLNWRHRLQSNVSSRLIGQPYDTTTSYILLPGTTELAPLLVPGELCLGGAQLARGYLHRPDETAKRFIPNPFGKGKLYRTGDMAVRHADGSVELIGRIDFQVKINGHRVDPGEPNSIIQAIEEVEDSAVVPASVNNRTVLVAAVVSRPDTEWEALVRKLRPFLAARLPLYMVPQFWVSMPALSVNANGKIDLVAIRRTVEALGESGQLLPERSSIGSREKRDLTDSEKVVRSLWAKVLSLSESEISLEDSFISLGGTSLEAIQVVSQLQVLHQLSLRVEDILLGETLFQVAAAVQPQPVEGKPDNDTISAALFEVAPSIESVGISISSIEDAFPVTPFQEAAIANTMMGGTSYIYSRSYSFEGYSPDDVRAAFETLMKSDGWLRTTYVPHGTSFLQVVKKTADLPWETSDMDVTEYLQKQTSKGMYPGELWWTAAALPNNVLVITAHHALFDFWSNEFLIQDLTSVLQGTPRIQRRGFRPYVEYLQQHDPVAMQEFWQGYLEGAVPSHLGSQIAPENTVAAEVHCDLKRTASQRRVTPGVLLYAAWAIVLGLANSTEDVVMGVTFSGRDVPLAGVLQMSGPTLMVAPLRVKVNKVTPLDKHLEDVQSNLWAVARNAPYGLRKILKASGQAKDLFDTMVNFLIKIPTSTPAGGLRQLPESNLGTVEYTRIELRNESLNRVTLTSTLEPRCAQALADTLAAILGAASDQPLTKLGEFRLVQPVPRLMERLDDPVGSVPVSAVHTIQAEDRVESPGGELAHSALQRMAASHPSRTAVEDISGARITYAGLAIKMNQLAGLLRERGLELEQIVPIMLEKSINTIVAMFGILVAGGAFLPLGPENPRERNLGILEDCGAKLVIADQLNADFFKGTSYEVIVIDAIAWDTIPLQRQVVPGLNPNSLAYVIYTSGSTGKPKGTLIPHSAIVAALDGILYATTQDNSRRIMWSLNYTFDGSFYPLFPTLATGRTLCVAPQNTIVGNLADVITKLRVDQINLTPTMASLLHPDDVPTLEILATGGEPVTHHMLNVWAPRIKVYTSYGPTEATICVTTRQVTPDMNIRNVGRPFPNTTALILDPDTMEELPSGSVGELCIAGPQLARGYLNRPEATNKAFQGTADQRFYRTGDLARLLPNGEIELFGRKDDQVKINGHRMELGEIESVIKQTNVFRQCAVIAATVLKKKQLVAFCSSSVQTPGEATGEDLLLAPTELPEVDQIKAQLTTLPQYMVPTIWLPVSKLPSLTSGKIDRKRLTALVEGMADNVLKSYLPHSETSEICSEAERELQSLWSALFDTPAEDIHANSTFHALGGDSISALNLGSMLRRRGYKIQINDILSRSTLREQAALMVQGQPNGDSTAAEAVPQPVFQPPEAVYERLVELGVSRNDVEDIYPCSPGQIEFFTQGEKPDRFWQLMAVRTLPDDLDFDRWIYLTTQLTKTNQILRALYLQTDAENPQTLVQVVLKHPVLNLAYRSYRTEEEKQSILEAEWQRPFDPAKPFVRYTLLEDSQGTRSLVINLHHSSYDGTLLHIFDDQFQALHQNQPIQQPTPFKDFITHFLRTPKQPQLDYWTRLLQNHSFDFPSAVIEPKLSSTEVAKIDASLGINGLASSTGVTAPIVFQTAYSLLLAHLSGARDVIYDNLVTGRNVALDNPQLINGNCANFLPYHSYVADDIPIETLLRSTQADFWTSTENGLVSLGEIYEALGRDRSTAAAKCLFCFQPFEPVTAQQDPMRWVVMKMSKNRMTFNYAIQMEVVKAAAKGEYLVRFGYDERAFSAEEARAALAWYTRCLDGMVKSKVVGELGV</sequence>
<protein>
    <recommendedName>
        <fullName>Nonribosomal peptide synthetase 7</fullName>
        <ecNumber>6.3.2.-</ecNumber>
    </recommendedName>
</protein>
<name>NRPS7_ASPFU</name>
<dbReference type="EC" id="6.3.2.-"/>
<dbReference type="EMBL" id="AAHF01000002">
    <property type="protein sequence ID" value="EAL92059.1"/>
    <property type="molecule type" value="Genomic_DNA"/>
</dbReference>
<dbReference type="RefSeq" id="XP_754097.1">
    <property type="nucleotide sequence ID" value="XM_749004.1"/>
</dbReference>
<dbReference type="SMR" id="Q4WZ44"/>
<dbReference type="STRING" id="330879.Q4WZ44"/>
<dbReference type="EnsemblFungi" id="EAL92059">
    <property type="protein sequence ID" value="EAL92059"/>
    <property type="gene ID" value="AFUA_3G15270"/>
</dbReference>
<dbReference type="GeneID" id="3512484"/>
<dbReference type="KEGG" id="afm:AFUA_3G15270"/>
<dbReference type="VEuPathDB" id="FungiDB:Afu3g15270"/>
<dbReference type="eggNOG" id="KOG1176">
    <property type="taxonomic scope" value="Eukaryota"/>
</dbReference>
<dbReference type="eggNOG" id="KOG1178">
    <property type="taxonomic scope" value="Eukaryota"/>
</dbReference>
<dbReference type="HOGENOM" id="CLU_000022_0_12_1"/>
<dbReference type="InParanoid" id="Q4WZ44"/>
<dbReference type="OMA" id="ECTQLNW"/>
<dbReference type="OrthoDB" id="416786at2759"/>
<dbReference type="Proteomes" id="UP000002530">
    <property type="component" value="Chromosome 3"/>
</dbReference>
<dbReference type="GO" id="GO:0005737">
    <property type="term" value="C:cytoplasm"/>
    <property type="evidence" value="ECO:0000318"/>
    <property type="project" value="GO_Central"/>
</dbReference>
<dbReference type="GO" id="GO:0016874">
    <property type="term" value="F:ligase activity"/>
    <property type="evidence" value="ECO:0007669"/>
    <property type="project" value="UniProtKB-KW"/>
</dbReference>
<dbReference type="GO" id="GO:0031177">
    <property type="term" value="F:phosphopantetheine binding"/>
    <property type="evidence" value="ECO:0000318"/>
    <property type="project" value="GO_Central"/>
</dbReference>
<dbReference type="GO" id="GO:0043041">
    <property type="term" value="P:amino acid activation for nonribosomal peptide biosynthetic process"/>
    <property type="evidence" value="ECO:0000318"/>
    <property type="project" value="GO_Central"/>
</dbReference>
<dbReference type="GO" id="GO:0019184">
    <property type="term" value="P:nonribosomal peptide biosynthetic process"/>
    <property type="evidence" value="ECO:0000255"/>
    <property type="project" value="AspGD"/>
</dbReference>
<dbReference type="GO" id="GO:0019748">
    <property type="term" value="P:secondary metabolic process"/>
    <property type="evidence" value="ECO:0000303"/>
    <property type="project" value="AspGD"/>
</dbReference>
<dbReference type="GO" id="GO:0044550">
    <property type="term" value="P:secondary metabolite biosynthetic process"/>
    <property type="evidence" value="ECO:0000318"/>
    <property type="project" value="GO_Central"/>
</dbReference>
<dbReference type="CDD" id="cd05918">
    <property type="entry name" value="A_NRPS_SidN3_like"/>
    <property type="match status" value="2"/>
</dbReference>
<dbReference type="CDD" id="cd19542">
    <property type="entry name" value="CT_NRPS-like"/>
    <property type="match status" value="1"/>
</dbReference>
<dbReference type="CDD" id="cd19545">
    <property type="entry name" value="FUM14_C_NRPS-like"/>
    <property type="match status" value="1"/>
</dbReference>
<dbReference type="FunFam" id="3.40.50.12780:FF:000012">
    <property type="entry name" value="Non-ribosomal peptide synthetase"/>
    <property type="match status" value="1"/>
</dbReference>
<dbReference type="FunFam" id="3.30.559.30:FF:000036">
    <property type="entry name" value="Nonribosomal peptide synthase, putative"/>
    <property type="match status" value="1"/>
</dbReference>
<dbReference type="FunFam" id="3.30.300.30:FF:000075">
    <property type="entry name" value="Nonribosomal peptide synthetase 7"/>
    <property type="match status" value="1"/>
</dbReference>
<dbReference type="FunFam" id="3.30.559.10:FF:000066">
    <property type="entry name" value="Nonribosomal peptide synthetase 7"/>
    <property type="match status" value="1"/>
</dbReference>
<dbReference type="Gene3D" id="3.30.300.30">
    <property type="match status" value="2"/>
</dbReference>
<dbReference type="Gene3D" id="1.10.1200.10">
    <property type="entry name" value="ACP-like"/>
    <property type="match status" value="2"/>
</dbReference>
<dbReference type="Gene3D" id="3.30.559.10">
    <property type="entry name" value="Chloramphenicol acetyltransferase-like domain"/>
    <property type="match status" value="2"/>
</dbReference>
<dbReference type="Gene3D" id="3.40.50.12780">
    <property type="entry name" value="N-terminal domain of ligase-like"/>
    <property type="match status" value="2"/>
</dbReference>
<dbReference type="Gene3D" id="3.30.559.30">
    <property type="entry name" value="Nonribosomal peptide synthetase, condensation domain"/>
    <property type="match status" value="3"/>
</dbReference>
<dbReference type="InterPro" id="IPR010071">
    <property type="entry name" value="AA_adenyl_dom"/>
</dbReference>
<dbReference type="InterPro" id="IPR036736">
    <property type="entry name" value="ACP-like_sf"/>
</dbReference>
<dbReference type="InterPro" id="IPR045851">
    <property type="entry name" value="AMP-bd_C_sf"/>
</dbReference>
<dbReference type="InterPro" id="IPR020845">
    <property type="entry name" value="AMP-binding_CS"/>
</dbReference>
<dbReference type="InterPro" id="IPR000873">
    <property type="entry name" value="AMP-dep_synth/lig_dom"/>
</dbReference>
<dbReference type="InterPro" id="IPR042099">
    <property type="entry name" value="ANL_N_sf"/>
</dbReference>
<dbReference type="InterPro" id="IPR023213">
    <property type="entry name" value="CAT-like_dom_sf"/>
</dbReference>
<dbReference type="InterPro" id="IPR001242">
    <property type="entry name" value="Condensatn"/>
</dbReference>
<dbReference type="InterPro" id="IPR009081">
    <property type="entry name" value="PP-bd_ACP"/>
</dbReference>
<dbReference type="InterPro" id="IPR006162">
    <property type="entry name" value="Ppantetheine_attach_site"/>
</dbReference>
<dbReference type="NCBIfam" id="TIGR01733">
    <property type="entry name" value="AA-adenyl-dom"/>
    <property type="match status" value="1"/>
</dbReference>
<dbReference type="PANTHER" id="PTHR45527:SF1">
    <property type="entry name" value="FATTY ACID SYNTHASE"/>
    <property type="match status" value="1"/>
</dbReference>
<dbReference type="PANTHER" id="PTHR45527">
    <property type="entry name" value="NONRIBOSOMAL PEPTIDE SYNTHETASE"/>
    <property type="match status" value="1"/>
</dbReference>
<dbReference type="Pfam" id="PF00501">
    <property type="entry name" value="AMP-binding"/>
    <property type="match status" value="2"/>
</dbReference>
<dbReference type="Pfam" id="PF00668">
    <property type="entry name" value="Condensation"/>
    <property type="match status" value="2"/>
</dbReference>
<dbReference type="Pfam" id="PF00550">
    <property type="entry name" value="PP-binding"/>
    <property type="match status" value="2"/>
</dbReference>
<dbReference type="SUPFAM" id="SSF56801">
    <property type="entry name" value="Acetyl-CoA synthetase-like"/>
    <property type="match status" value="2"/>
</dbReference>
<dbReference type="SUPFAM" id="SSF47336">
    <property type="entry name" value="ACP-like"/>
    <property type="match status" value="2"/>
</dbReference>
<dbReference type="SUPFAM" id="SSF52777">
    <property type="entry name" value="CoA-dependent acyltransferases"/>
    <property type="match status" value="5"/>
</dbReference>
<dbReference type="PROSITE" id="PS00455">
    <property type="entry name" value="AMP_BINDING"/>
    <property type="match status" value="2"/>
</dbReference>
<dbReference type="PROSITE" id="PS50075">
    <property type="entry name" value="CARRIER"/>
    <property type="match status" value="2"/>
</dbReference>
<dbReference type="PROSITE" id="PS00012">
    <property type="entry name" value="PHOSPHOPANTETHEINE"/>
    <property type="match status" value="1"/>
</dbReference>
<gene>
    <name type="primary">NRPS7</name>
    <name type="synonym">pesH</name>
    <name type="ORF">AFUA_3G15270</name>
</gene>
<comment type="function">
    <text>Nonribosomal peptide synthesis (NRPS) is a key mechanism responsible for the biosynthesis of bioactive metabolites which are potentially contributing to organismal virulence.</text>
</comment>
<comment type="domain">
    <text evidence="2">NRP synthetases are composed of discrete domains (adenylation (A), thiolation (T) or peptidyl carrier protein (PCP) and condensation (C) domains) which when grouped together are referred to as a single module. Each module is responsible for the recognition (via the A domain) and incorporation of a single amino acid into the growing peptide product. Thus, an NRP synthetase is generally composed of one or more modules and can terminate in a thioesterase domain (TE) that releases the newly synthesized peptide from the enzyme. Occasionally, epimerase (E) domains (responsible for l- to d- amino acid conversion) are present within the NRP synthetase. NRPS7 has the following architecture: A-T-C-A-T-C.</text>
</comment>
<comment type="similarity">
    <text evidence="3">Belongs to the NRP synthetase family.</text>
</comment>
<reference key="1">
    <citation type="journal article" date="2005" name="Nature">
        <title>Genomic sequence of the pathogenic and allergenic filamentous fungus Aspergillus fumigatus.</title>
        <authorList>
            <person name="Nierman W.C."/>
            <person name="Pain A."/>
            <person name="Anderson M.J."/>
            <person name="Wortman J.R."/>
            <person name="Kim H.S."/>
            <person name="Arroyo J."/>
            <person name="Berriman M."/>
            <person name="Abe K."/>
            <person name="Archer D.B."/>
            <person name="Bermejo C."/>
            <person name="Bennett J.W."/>
            <person name="Bowyer P."/>
            <person name="Chen D."/>
            <person name="Collins M."/>
            <person name="Coulsen R."/>
            <person name="Davies R."/>
            <person name="Dyer P.S."/>
            <person name="Farman M.L."/>
            <person name="Fedorova N."/>
            <person name="Fedorova N.D."/>
            <person name="Feldblyum T.V."/>
            <person name="Fischer R."/>
            <person name="Fosker N."/>
            <person name="Fraser A."/>
            <person name="Garcia J.L."/>
            <person name="Garcia M.J."/>
            <person name="Goble A."/>
            <person name="Goldman G.H."/>
            <person name="Gomi K."/>
            <person name="Griffith-Jones S."/>
            <person name="Gwilliam R."/>
            <person name="Haas B.J."/>
            <person name="Haas H."/>
            <person name="Harris D.E."/>
            <person name="Horiuchi H."/>
            <person name="Huang J."/>
            <person name="Humphray S."/>
            <person name="Jimenez J."/>
            <person name="Keller N."/>
            <person name="Khouri H."/>
            <person name="Kitamoto K."/>
            <person name="Kobayashi T."/>
            <person name="Konzack S."/>
            <person name="Kulkarni R."/>
            <person name="Kumagai T."/>
            <person name="Lafton A."/>
            <person name="Latge J.-P."/>
            <person name="Li W."/>
            <person name="Lord A."/>
            <person name="Lu C."/>
            <person name="Majoros W.H."/>
            <person name="May G.S."/>
            <person name="Miller B.L."/>
            <person name="Mohamoud Y."/>
            <person name="Molina M."/>
            <person name="Monod M."/>
            <person name="Mouyna I."/>
            <person name="Mulligan S."/>
            <person name="Murphy L.D."/>
            <person name="O'Neil S."/>
            <person name="Paulsen I."/>
            <person name="Penalva M.A."/>
            <person name="Pertea M."/>
            <person name="Price C."/>
            <person name="Pritchard B.L."/>
            <person name="Quail M.A."/>
            <person name="Rabbinowitsch E."/>
            <person name="Rawlins N."/>
            <person name="Rajandream M.A."/>
            <person name="Reichard U."/>
            <person name="Renauld H."/>
            <person name="Robson G.D."/>
            <person name="Rodriguez de Cordoba S."/>
            <person name="Rodriguez-Pena J.M."/>
            <person name="Ronning C.M."/>
            <person name="Rutter S."/>
            <person name="Salzberg S.L."/>
            <person name="Sanchez M."/>
            <person name="Sanchez-Ferrero J.C."/>
            <person name="Saunders D."/>
            <person name="Seeger K."/>
            <person name="Squares R."/>
            <person name="Squares S."/>
            <person name="Takeuchi M."/>
            <person name="Tekaia F."/>
            <person name="Turner G."/>
            <person name="Vazquez de Aldana C.R."/>
            <person name="Weidman J."/>
            <person name="White O."/>
            <person name="Woodward J.R."/>
            <person name="Yu J.-H."/>
            <person name="Fraser C.M."/>
            <person name="Galagan J.E."/>
            <person name="Asai K."/>
            <person name="Machida M."/>
            <person name="Hall N."/>
            <person name="Barrell B.G."/>
            <person name="Denning D.W."/>
        </authorList>
    </citation>
    <scope>NUCLEOTIDE SEQUENCE [LARGE SCALE GENOMIC DNA]</scope>
    <source>
        <strain>ATCC MYA-4609 / CBS 101355 / FGSC A1100 / Af293</strain>
    </source>
</reference>
<reference key="2">
    <citation type="journal article" date="2006" name="Gene">
        <title>Phylogenomic analysis of non-ribosomal peptide synthetases in the genus Aspergillus.</title>
        <authorList>
            <person name="Cramer R.A. Jr."/>
            <person name="Stajich J.E."/>
            <person name="Yamanaka Y."/>
            <person name="Dietrich F.S."/>
            <person name="Steinbach W.J."/>
            <person name="Perfect J.R."/>
        </authorList>
    </citation>
    <scope>NOMENCLATURE</scope>
</reference>
<reference key="3">
    <citation type="journal article" date="2007" name="Microbiology">
        <title>Nonribosomal peptide synthesis in Aspergillus fumigatus and other fungi.</title>
        <authorList>
            <person name="Stack D."/>
            <person name="Neville C."/>
            <person name="Doyle S."/>
        </authorList>
    </citation>
    <scope>REVIEW ON FUNCTION</scope>
    <scope>DOMAIN</scope>
</reference>
<organism>
    <name type="scientific">Aspergillus fumigatus (strain ATCC MYA-4609 / CBS 101355 / FGSC A1100 / Af293)</name>
    <name type="common">Neosartorya fumigata</name>
    <dbReference type="NCBI Taxonomy" id="330879"/>
    <lineage>
        <taxon>Eukaryota</taxon>
        <taxon>Fungi</taxon>
        <taxon>Dikarya</taxon>
        <taxon>Ascomycota</taxon>
        <taxon>Pezizomycotina</taxon>
        <taxon>Eurotiomycetes</taxon>
        <taxon>Eurotiomycetidae</taxon>
        <taxon>Eurotiales</taxon>
        <taxon>Aspergillaceae</taxon>
        <taxon>Aspergillus</taxon>
        <taxon>Aspergillus subgen. Fumigati</taxon>
    </lineage>
</organism>
<keyword id="KW-0436">Ligase</keyword>
<keyword id="KW-0596">Phosphopantetheine</keyword>
<keyword id="KW-0597">Phosphoprotein</keyword>
<keyword id="KW-1185">Reference proteome</keyword>
<keyword id="KW-0677">Repeat</keyword>
<keyword id="KW-0843">Virulence</keyword>
<evidence type="ECO:0000255" key="1">
    <source>
        <dbReference type="PROSITE-ProRule" id="PRU00258"/>
    </source>
</evidence>
<evidence type="ECO:0000269" key="2">
    <source>
    </source>
</evidence>
<evidence type="ECO:0000305" key="3"/>